<reference key="1">
    <citation type="submission" date="2008-05" db="EMBL/GenBank/DDBJ databases">
        <title>Complete sequence of Shigella boydii serotype 18 strain BS512.</title>
        <authorList>
            <person name="Rasko D.A."/>
            <person name="Rosovitz M."/>
            <person name="Maurelli A.T."/>
            <person name="Myers G."/>
            <person name="Seshadri R."/>
            <person name="Cer R."/>
            <person name="Jiang L."/>
            <person name="Ravel J."/>
            <person name="Sebastian Y."/>
        </authorList>
    </citation>
    <scope>NUCLEOTIDE SEQUENCE [LARGE SCALE GENOMIC DNA]</scope>
    <source>
        <strain>CDC 3083-94 / BS512</strain>
    </source>
</reference>
<keyword id="KW-1185">Reference proteome</keyword>
<keyword id="KW-0687">Ribonucleoprotein</keyword>
<keyword id="KW-0689">Ribosomal protein</keyword>
<evidence type="ECO:0000255" key="1">
    <source>
        <dbReference type="HAMAP-Rule" id="MF_00294"/>
    </source>
</evidence>
<evidence type="ECO:0000305" key="2"/>
<accession>B2TTV0</accession>
<dbReference type="EMBL" id="CP001063">
    <property type="protein sequence ID" value="ACD06595.1"/>
    <property type="molecule type" value="Genomic_DNA"/>
</dbReference>
<dbReference type="RefSeq" id="WP_001051798.1">
    <property type="nucleotide sequence ID" value="NC_010658.1"/>
</dbReference>
<dbReference type="SMR" id="B2TTV0"/>
<dbReference type="STRING" id="344609.SbBS512_E4061"/>
<dbReference type="GeneID" id="97607673"/>
<dbReference type="KEGG" id="sbc:SbBS512_E4061"/>
<dbReference type="HOGENOM" id="CLU_190949_1_1_6"/>
<dbReference type="Proteomes" id="UP000001030">
    <property type="component" value="Chromosome"/>
</dbReference>
<dbReference type="GO" id="GO:0022625">
    <property type="term" value="C:cytosolic large ribosomal subunit"/>
    <property type="evidence" value="ECO:0007669"/>
    <property type="project" value="TreeGrafter"/>
</dbReference>
<dbReference type="GO" id="GO:0003735">
    <property type="term" value="F:structural constituent of ribosome"/>
    <property type="evidence" value="ECO:0007669"/>
    <property type="project" value="InterPro"/>
</dbReference>
<dbReference type="GO" id="GO:0006412">
    <property type="term" value="P:translation"/>
    <property type="evidence" value="ECO:0007669"/>
    <property type="project" value="UniProtKB-UniRule"/>
</dbReference>
<dbReference type="FunFam" id="2.20.28.120:FF:000001">
    <property type="entry name" value="50S ribosomal protein L33"/>
    <property type="match status" value="1"/>
</dbReference>
<dbReference type="Gene3D" id="2.20.28.120">
    <property type="entry name" value="Ribosomal protein L33"/>
    <property type="match status" value="1"/>
</dbReference>
<dbReference type="HAMAP" id="MF_00294">
    <property type="entry name" value="Ribosomal_bL33"/>
    <property type="match status" value="1"/>
</dbReference>
<dbReference type="InterPro" id="IPR001705">
    <property type="entry name" value="Ribosomal_bL33"/>
</dbReference>
<dbReference type="InterPro" id="IPR018264">
    <property type="entry name" value="Ribosomal_bL33_CS"/>
</dbReference>
<dbReference type="InterPro" id="IPR038584">
    <property type="entry name" value="Ribosomal_bL33_sf"/>
</dbReference>
<dbReference type="InterPro" id="IPR011332">
    <property type="entry name" value="Ribosomal_zn-bd"/>
</dbReference>
<dbReference type="NCBIfam" id="NF001860">
    <property type="entry name" value="PRK00595.1"/>
    <property type="match status" value="1"/>
</dbReference>
<dbReference type="NCBIfam" id="TIGR01023">
    <property type="entry name" value="rpmG_bact"/>
    <property type="match status" value="1"/>
</dbReference>
<dbReference type="PANTHER" id="PTHR15238">
    <property type="entry name" value="54S RIBOSOMAL PROTEIN L39, MITOCHONDRIAL"/>
    <property type="match status" value="1"/>
</dbReference>
<dbReference type="PANTHER" id="PTHR15238:SF1">
    <property type="entry name" value="LARGE RIBOSOMAL SUBUNIT PROTEIN BL33M"/>
    <property type="match status" value="1"/>
</dbReference>
<dbReference type="Pfam" id="PF00471">
    <property type="entry name" value="Ribosomal_L33"/>
    <property type="match status" value="1"/>
</dbReference>
<dbReference type="SUPFAM" id="SSF57829">
    <property type="entry name" value="Zn-binding ribosomal proteins"/>
    <property type="match status" value="1"/>
</dbReference>
<dbReference type="PROSITE" id="PS00582">
    <property type="entry name" value="RIBOSOMAL_L33"/>
    <property type="match status" value="1"/>
</dbReference>
<gene>
    <name evidence="1" type="primary">rpmG</name>
    <name type="ordered locus">SbBS512_E4061</name>
</gene>
<sequence length="55" mass="6372">MAKGIREKIKLVSSAGTGHFYTTTKNKRTKPEKLELKKFDPVVRQHVIYKEAKIK</sequence>
<proteinExistence type="inferred from homology"/>
<feature type="chain" id="PRO_1000115161" description="Large ribosomal subunit protein bL33">
    <location>
        <begin position="1"/>
        <end position="55"/>
    </location>
</feature>
<organism>
    <name type="scientific">Shigella boydii serotype 18 (strain CDC 3083-94 / BS512)</name>
    <dbReference type="NCBI Taxonomy" id="344609"/>
    <lineage>
        <taxon>Bacteria</taxon>
        <taxon>Pseudomonadati</taxon>
        <taxon>Pseudomonadota</taxon>
        <taxon>Gammaproteobacteria</taxon>
        <taxon>Enterobacterales</taxon>
        <taxon>Enterobacteriaceae</taxon>
        <taxon>Shigella</taxon>
    </lineage>
</organism>
<name>RL33_SHIB3</name>
<comment type="similarity">
    <text evidence="1">Belongs to the bacterial ribosomal protein bL33 family.</text>
</comment>
<protein>
    <recommendedName>
        <fullName evidence="1">Large ribosomal subunit protein bL33</fullName>
    </recommendedName>
    <alternativeName>
        <fullName evidence="2">50S ribosomal protein L33</fullName>
    </alternativeName>
</protein>